<dbReference type="EMBL" id="AF164609">
    <property type="protein sequence ID" value="AAD51791.1"/>
    <property type="status" value="ALT_FRAME"/>
    <property type="molecule type" value="Genomic_DNA"/>
</dbReference>
<dbReference type="EMBL" id="AC007326">
    <property type="status" value="NOT_ANNOTATED_CDS"/>
    <property type="molecule type" value="Genomic_DNA"/>
</dbReference>
<dbReference type="PDB" id="6SSJ">
    <property type="method" value="EM"/>
    <property type="resolution" value="2.75 A"/>
    <property type="chains" value="A=283-528"/>
</dbReference>
<dbReference type="PDB" id="6SSK">
    <property type="method" value="EM"/>
    <property type="resolution" value="3.18 A"/>
    <property type="chains" value="A/B/C/D/E/F/G/H/I=283-528"/>
</dbReference>
<dbReference type="PDB" id="6SSL">
    <property type="method" value="EM"/>
    <property type="resolution" value="3.77 A"/>
    <property type="chains" value="A/B/C/D/E/F/G/H/I=283-528"/>
</dbReference>
<dbReference type="PDB" id="6SSM">
    <property type="method" value="EM"/>
    <property type="resolution" value="4.34 A"/>
    <property type="chains" value="A/B/C=283-528"/>
</dbReference>
<dbReference type="PDBsum" id="6SSJ"/>
<dbReference type="PDBsum" id="6SSK"/>
<dbReference type="PDBsum" id="6SSL"/>
<dbReference type="PDBsum" id="6SSM"/>
<dbReference type="EMDB" id="EMD-10295"/>
<dbReference type="EMDB" id="EMD-10296"/>
<dbReference type="EMDB" id="EMD-10297"/>
<dbReference type="EMDB" id="EMD-10298"/>
<dbReference type="SMR" id="P63145"/>
<dbReference type="BioMuta" id="HGNC:39038"/>
<dbReference type="MassIVE" id="P63145"/>
<dbReference type="PeptideAtlas" id="P63145"/>
<dbReference type="GeneCards" id="ERVK-24"/>
<dbReference type="HGNC" id="HGNC:39038">
    <property type="gene designation" value="ERVK-24"/>
</dbReference>
<dbReference type="neXtProt" id="NX_P63145"/>
<dbReference type="InParanoid" id="P63145"/>
<dbReference type="PAN-GO" id="P63145">
    <property type="GO annotations" value="0 GO annotations based on evolutionary models"/>
</dbReference>
<dbReference type="PhylomeDB" id="P63145"/>
<dbReference type="Pharos" id="P63145">
    <property type="development level" value="Tdark"/>
</dbReference>
<dbReference type="Proteomes" id="UP000005640">
    <property type="component" value="Unplaced"/>
</dbReference>
<dbReference type="RNAct" id="P63145">
    <property type="molecule type" value="protein"/>
</dbReference>
<dbReference type="GO" id="GO:0005886">
    <property type="term" value="C:plasma membrane"/>
    <property type="evidence" value="ECO:0007669"/>
    <property type="project" value="UniProtKB-SubCell"/>
</dbReference>
<dbReference type="GO" id="GO:0003676">
    <property type="term" value="F:nucleic acid binding"/>
    <property type="evidence" value="ECO:0007669"/>
    <property type="project" value="InterPro"/>
</dbReference>
<dbReference type="GO" id="GO:0005198">
    <property type="term" value="F:structural molecule activity"/>
    <property type="evidence" value="ECO:0007669"/>
    <property type="project" value="InterPro"/>
</dbReference>
<dbReference type="GO" id="GO:0008270">
    <property type="term" value="F:zinc ion binding"/>
    <property type="evidence" value="ECO:0007669"/>
    <property type="project" value="UniProtKB-KW"/>
</dbReference>
<dbReference type="GO" id="GO:0075523">
    <property type="term" value="P:viral translational frameshifting"/>
    <property type="evidence" value="ECO:0007669"/>
    <property type="project" value="UniProtKB-KW"/>
</dbReference>
<dbReference type="Gene3D" id="1.10.1200.30">
    <property type="match status" value="1"/>
</dbReference>
<dbReference type="Gene3D" id="1.10.375.10">
    <property type="entry name" value="Human Immunodeficiency Virus Type 1 Capsid Protein"/>
    <property type="match status" value="1"/>
</dbReference>
<dbReference type="Gene3D" id="1.10.150.490">
    <property type="entry name" value="Retroviral GAG p10 protein"/>
    <property type="match status" value="1"/>
</dbReference>
<dbReference type="Gene3D" id="4.10.60.10">
    <property type="entry name" value="Zinc finger, CCHC-type"/>
    <property type="match status" value="1"/>
</dbReference>
<dbReference type="InterPro" id="IPR003322">
    <property type="entry name" value="B_retro_matrix"/>
</dbReference>
<dbReference type="InterPro" id="IPR038124">
    <property type="entry name" value="B_retro_matrix_sf"/>
</dbReference>
<dbReference type="InterPro" id="IPR045345">
    <property type="entry name" value="Gag_p24_C"/>
</dbReference>
<dbReference type="InterPro" id="IPR050195">
    <property type="entry name" value="Primate_lentivir_Gag_pol-like"/>
</dbReference>
<dbReference type="InterPro" id="IPR008916">
    <property type="entry name" value="Retrov_capsid_C"/>
</dbReference>
<dbReference type="InterPro" id="IPR008919">
    <property type="entry name" value="Retrov_capsid_N"/>
</dbReference>
<dbReference type="InterPro" id="IPR010999">
    <property type="entry name" value="Retrovr_matrix"/>
</dbReference>
<dbReference type="InterPro" id="IPR001878">
    <property type="entry name" value="Znf_CCHC"/>
</dbReference>
<dbReference type="InterPro" id="IPR036875">
    <property type="entry name" value="Znf_CCHC_sf"/>
</dbReference>
<dbReference type="PANTHER" id="PTHR40389">
    <property type="entry name" value="ENDOGENOUS RETROVIRUS GROUP K MEMBER 24 GAG POLYPROTEIN-RELATED"/>
    <property type="match status" value="1"/>
</dbReference>
<dbReference type="PANTHER" id="PTHR40389:SF2">
    <property type="entry name" value="ENDOGENOUS RETROVIRUS GROUP K MEMBER 24 GAG POLYPROTEIN-RELATED"/>
    <property type="match status" value="1"/>
</dbReference>
<dbReference type="Pfam" id="PF02337">
    <property type="entry name" value="Gag_p10"/>
    <property type="match status" value="1"/>
</dbReference>
<dbReference type="Pfam" id="PF00607">
    <property type="entry name" value="Gag_p24"/>
    <property type="match status" value="1"/>
</dbReference>
<dbReference type="Pfam" id="PF19317">
    <property type="entry name" value="Gag_p24_C"/>
    <property type="match status" value="1"/>
</dbReference>
<dbReference type="Pfam" id="PF00098">
    <property type="entry name" value="zf-CCHC"/>
    <property type="match status" value="1"/>
</dbReference>
<dbReference type="Pfam" id="PF14787">
    <property type="entry name" value="zf-CCHC_5"/>
    <property type="match status" value="1"/>
</dbReference>
<dbReference type="SMART" id="SM00343">
    <property type="entry name" value="ZnF_C2HC"/>
    <property type="match status" value="2"/>
</dbReference>
<dbReference type="SUPFAM" id="SSF47836">
    <property type="entry name" value="Retroviral matrix proteins"/>
    <property type="match status" value="1"/>
</dbReference>
<dbReference type="SUPFAM" id="SSF47353">
    <property type="entry name" value="Retrovirus capsid dimerization domain-like"/>
    <property type="match status" value="1"/>
</dbReference>
<dbReference type="SUPFAM" id="SSF47943">
    <property type="entry name" value="Retrovirus capsid protein, N-terminal core domain"/>
    <property type="match status" value="1"/>
</dbReference>
<dbReference type="SUPFAM" id="SSF57756">
    <property type="entry name" value="Retrovirus zinc finger-like domains"/>
    <property type="match status" value="2"/>
</dbReference>
<dbReference type="PROSITE" id="PS50158">
    <property type="entry name" value="ZF_CCHC"/>
    <property type="match status" value="1"/>
</dbReference>
<keyword id="KW-0002">3D-structure</keyword>
<keyword id="KW-1003">Cell membrane</keyword>
<keyword id="KW-0895">ERV</keyword>
<keyword id="KW-0449">Lipoprotein</keyword>
<keyword id="KW-0472">Membrane</keyword>
<keyword id="KW-0479">Metal-binding</keyword>
<keyword id="KW-0519">Myristate</keyword>
<keyword id="KW-1185">Reference proteome</keyword>
<keyword id="KW-0677">Repeat</keyword>
<keyword id="KW-0688">Ribosomal frameshifting</keyword>
<keyword id="KW-0814">Transposable element</keyword>
<keyword id="KW-0862">Zinc</keyword>
<keyword id="KW-0863">Zinc-finger</keyword>
<protein>
    <recommendedName>
        <fullName>Endogenous retrovirus group K member 24 Gag polyprotein</fullName>
    </recommendedName>
    <alternativeName>
        <fullName>HERV-K101 Gag protein</fullName>
    </alternativeName>
    <alternativeName>
        <fullName>HERV-K_22q11.21 provirus ancestral Gag polyprotein</fullName>
        <shortName>Gag polyprotein</shortName>
    </alternativeName>
</protein>
<organism>
    <name type="scientific">Homo sapiens</name>
    <name type="common">Human</name>
    <dbReference type="NCBI Taxonomy" id="9606"/>
    <lineage>
        <taxon>Eukaryota</taxon>
        <taxon>Metazoa</taxon>
        <taxon>Chordata</taxon>
        <taxon>Craniata</taxon>
        <taxon>Vertebrata</taxon>
        <taxon>Euteleostomi</taxon>
        <taxon>Mammalia</taxon>
        <taxon>Eutheria</taxon>
        <taxon>Euarchontoglires</taxon>
        <taxon>Primates</taxon>
        <taxon>Haplorrhini</taxon>
        <taxon>Catarrhini</taxon>
        <taxon>Hominidae</taxon>
        <taxon>Homo</taxon>
    </lineage>
</organism>
<evidence type="ECO:0000250" key="1"/>
<evidence type="ECO:0000255" key="2"/>
<evidence type="ECO:0000255" key="3">
    <source>
        <dbReference type="PROSITE-ProRule" id="PRU00047"/>
    </source>
</evidence>
<evidence type="ECO:0000256" key="4">
    <source>
        <dbReference type="SAM" id="MobiDB-lite"/>
    </source>
</evidence>
<evidence type="ECO:0000305" key="5"/>
<evidence type="ECO:0007829" key="6">
    <source>
        <dbReference type="PDB" id="6SSJ"/>
    </source>
</evidence>
<name>GAK24_HUMAN</name>
<sequence>MGQTKSKIKSKYASYLSFIKILLKRGGVKVSTKNLIKLFQIIEQFCPWFPEQGTLDLKDWKRIGKELKQAGRKGNIIPLTVWNDWAIIKAALEPFQTEEDSVSVSDAPGSCLIDCNEKTRKKSQKETESLHCEYVAEPVMAQSTQNVDYNQLQEVIYPETLKLEGKGPELVGPSESKPRGTSPLPAGQVPVTLQPQKQVKENKTQPPVAYQYWPPAELQYRPPPESQYGYPGMPPAPQGRAPYPQPPTRRLNPTAPPSRQGSELHEIIDKSRKEGDTEAWQFPVTLEPMPPGEGAQEGEPPTVEARYKSFSIKMLKDMKEGVKQYGPNSPYMRTLLDSIAYGHRLIPYDWEILAKSSLSPSQFLQFKTWWIDGVQEQVRRNRAANPPVNIDADQLLGIGQNWSTISQQALMQNEAIEQVRAICLRAWEKIQDPGSACPSFNTVRQGSKEPYPDFVARLQDVAQKSIADEKARKVIVELMAYENANPECQSAIKPLKGKVPAGSDVISEYVKACDGIGGAMHKAMLMAQAITGVVLGGQVRTFGGKCYNCGQIGHLKKNCPVLNKQNITIQATTTGREPPDLCPRCKKGKHWASQCRSKFDKNGQPLSGNEQRGQPQAPQQTGAFPIQPFVPQGFQGQQPPLSQVFQGISQLPQYNNCPLPQAAVQQ</sequence>
<reference key="1">
    <citation type="journal article" date="1999" name="Curr. Biol.">
        <title>Many human endogenous retrovirus K (HERV-K) proviruses are unique to humans.</title>
        <authorList>
            <person name="Barbulescu M."/>
            <person name="Turner G."/>
            <person name="Seaman M.I."/>
            <person name="Deinard A.S."/>
            <person name="Kidd K.K."/>
            <person name="Lenz J."/>
        </authorList>
    </citation>
    <scope>NUCLEOTIDE SEQUENCE [GENOMIC DNA]</scope>
</reference>
<reference key="2">
    <citation type="journal article" date="1999" name="Nature">
        <title>The DNA sequence of human chromosome 22.</title>
        <authorList>
            <person name="Dunham I."/>
            <person name="Hunt A.R."/>
            <person name="Collins J.E."/>
            <person name="Bruskiewich R."/>
            <person name="Beare D.M."/>
            <person name="Clamp M."/>
            <person name="Smink L.J."/>
            <person name="Ainscough R."/>
            <person name="Almeida J.P."/>
            <person name="Babbage A.K."/>
            <person name="Bagguley C."/>
            <person name="Bailey J."/>
            <person name="Barlow K.F."/>
            <person name="Bates K.N."/>
            <person name="Beasley O.P."/>
            <person name="Bird C.P."/>
            <person name="Blakey S.E."/>
            <person name="Bridgeman A.M."/>
            <person name="Buck D."/>
            <person name="Burgess J."/>
            <person name="Burrill W.D."/>
            <person name="Burton J."/>
            <person name="Carder C."/>
            <person name="Carter N.P."/>
            <person name="Chen Y."/>
            <person name="Clark G."/>
            <person name="Clegg S.M."/>
            <person name="Cobley V.E."/>
            <person name="Cole C.G."/>
            <person name="Collier R.E."/>
            <person name="Connor R."/>
            <person name="Conroy D."/>
            <person name="Corby N.R."/>
            <person name="Coville G.J."/>
            <person name="Cox A.V."/>
            <person name="Davis J."/>
            <person name="Dawson E."/>
            <person name="Dhami P.D."/>
            <person name="Dockree C."/>
            <person name="Dodsworth S.J."/>
            <person name="Durbin R.M."/>
            <person name="Ellington A.G."/>
            <person name="Evans K.L."/>
            <person name="Fey J.M."/>
            <person name="Fleming K."/>
            <person name="French L."/>
            <person name="Garner A.A."/>
            <person name="Gilbert J.G.R."/>
            <person name="Goward M.E."/>
            <person name="Grafham D.V."/>
            <person name="Griffiths M.N.D."/>
            <person name="Hall C."/>
            <person name="Hall R.E."/>
            <person name="Hall-Tamlyn G."/>
            <person name="Heathcott R.W."/>
            <person name="Ho S."/>
            <person name="Holmes S."/>
            <person name="Hunt S.E."/>
            <person name="Jones M.C."/>
            <person name="Kershaw J."/>
            <person name="Kimberley A.M."/>
            <person name="King A."/>
            <person name="Laird G.K."/>
            <person name="Langford C.F."/>
            <person name="Leversha M.A."/>
            <person name="Lloyd C."/>
            <person name="Lloyd D.M."/>
            <person name="Martyn I.D."/>
            <person name="Mashreghi-Mohammadi M."/>
            <person name="Matthews L.H."/>
            <person name="Mccann O.T."/>
            <person name="Mcclay J."/>
            <person name="Mclaren S."/>
            <person name="McMurray A.A."/>
            <person name="Milne S.A."/>
            <person name="Mortimore B.J."/>
            <person name="Odell C.N."/>
            <person name="Pavitt R."/>
            <person name="Pearce A.V."/>
            <person name="Pearson D."/>
            <person name="Phillimore B.J.C.T."/>
            <person name="Phillips S.H."/>
            <person name="Plumb R.W."/>
            <person name="Ramsay H."/>
            <person name="Ramsey Y."/>
            <person name="Rogers L."/>
            <person name="Ross M.T."/>
            <person name="Scott C.E."/>
            <person name="Sehra H.K."/>
            <person name="Skuce C.D."/>
            <person name="Smalley S."/>
            <person name="Smith M.L."/>
            <person name="Soderlund C."/>
            <person name="Spragon L."/>
            <person name="Steward C.A."/>
            <person name="Sulston J.E."/>
            <person name="Swann R.M."/>
            <person name="Vaudin M."/>
            <person name="Wall M."/>
            <person name="Wallis J.M."/>
            <person name="Whiteley M.N."/>
            <person name="Willey D.L."/>
            <person name="Williams L."/>
            <person name="Williams S.A."/>
            <person name="Williamson H."/>
            <person name="Wilmer T.E."/>
            <person name="Wilming L."/>
            <person name="Wright C.L."/>
            <person name="Hubbard T."/>
            <person name="Bentley D.R."/>
            <person name="Beck S."/>
            <person name="Rogers J."/>
            <person name="Shimizu N."/>
            <person name="Minoshima S."/>
            <person name="Kawasaki K."/>
            <person name="Sasaki T."/>
            <person name="Asakawa S."/>
            <person name="Kudoh J."/>
            <person name="Shintani A."/>
            <person name="Shibuya K."/>
            <person name="Yoshizaki Y."/>
            <person name="Aoki N."/>
            <person name="Mitsuyama S."/>
            <person name="Roe B.A."/>
            <person name="Chen F."/>
            <person name="Chu L."/>
            <person name="Crabtree J."/>
            <person name="Deschamps S."/>
            <person name="Do A."/>
            <person name="Do T."/>
            <person name="Dorman A."/>
            <person name="Fang F."/>
            <person name="Fu Y."/>
            <person name="Hu P."/>
            <person name="Hua A."/>
            <person name="Kenton S."/>
            <person name="Lai H."/>
            <person name="Lao H.I."/>
            <person name="Lewis J."/>
            <person name="Lewis S."/>
            <person name="Lin S.-P."/>
            <person name="Loh P."/>
            <person name="Malaj E."/>
            <person name="Nguyen T."/>
            <person name="Pan H."/>
            <person name="Phan S."/>
            <person name="Qi S."/>
            <person name="Qian Y."/>
            <person name="Ray L."/>
            <person name="Ren Q."/>
            <person name="Shaull S."/>
            <person name="Sloan D."/>
            <person name="Song L."/>
            <person name="Wang Q."/>
            <person name="Wang Y."/>
            <person name="Wang Z."/>
            <person name="White J."/>
            <person name="Willingham D."/>
            <person name="Wu H."/>
            <person name="Yao Z."/>
            <person name="Zhan M."/>
            <person name="Zhang G."/>
            <person name="Chissoe S."/>
            <person name="Murray J."/>
            <person name="Miller N."/>
            <person name="Minx P."/>
            <person name="Fulton R."/>
            <person name="Johnson D."/>
            <person name="Bemis G."/>
            <person name="Bentley D."/>
            <person name="Bradshaw H."/>
            <person name="Bourne S."/>
            <person name="Cordes M."/>
            <person name="Du Z."/>
            <person name="Fulton L."/>
            <person name="Goela D."/>
            <person name="Graves T."/>
            <person name="Hawkins J."/>
            <person name="Hinds K."/>
            <person name="Kemp K."/>
            <person name="Latreille P."/>
            <person name="Layman D."/>
            <person name="Ozersky P."/>
            <person name="Rohlfing T."/>
            <person name="Scheet P."/>
            <person name="Walker C."/>
            <person name="Wamsley A."/>
            <person name="Wohldmann P."/>
            <person name="Pepin K."/>
            <person name="Nelson J."/>
            <person name="Korf I."/>
            <person name="Bedell J.A."/>
            <person name="Hillier L.W."/>
            <person name="Mardis E."/>
            <person name="Waterston R."/>
            <person name="Wilson R."/>
            <person name="Emanuel B.S."/>
            <person name="Shaikh T."/>
            <person name="Kurahashi H."/>
            <person name="Saitta S."/>
            <person name="Budarf M.L."/>
            <person name="McDermid H.E."/>
            <person name="Johnson A."/>
            <person name="Wong A.C.C."/>
            <person name="Morrow B.E."/>
            <person name="Edelmann L."/>
            <person name="Kim U.J."/>
            <person name="Shizuya H."/>
            <person name="Simon M.I."/>
            <person name="Dumanski J.P."/>
            <person name="Peyrard M."/>
            <person name="Kedra D."/>
            <person name="Seroussi E."/>
            <person name="Fransson I."/>
            <person name="Tapia I."/>
            <person name="Bruder C.E."/>
            <person name="O'Brien K.P."/>
            <person name="Wilkinson P."/>
            <person name="Bodenteich A."/>
            <person name="Hartman K."/>
            <person name="Hu X."/>
            <person name="Khan A.S."/>
            <person name="Lane L."/>
            <person name="Tilahun Y."/>
            <person name="Wright H."/>
        </authorList>
    </citation>
    <scope>NUCLEOTIDE SEQUENCE [LARGE SCALE GENOMIC DNA]</scope>
</reference>
<reference key="3">
    <citation type="journal article" date="1995" name="J. Virol.">
        <title>Human endogenous retrovirus K10: expression of Gag protein and detection of antibodies in patients with seminomas.</title>
        <authorList>
            <person name="Sauter M."/>
            <person name="Schommer S."/>
            <person name="Kremmer E."/>
            <person name="Remberger K."/>
            <person name="Doelken G."/>
            <person name="Lemm I."/>
            <person name="Buck M."/>
            <person name="Best B."/>
            <person name="Neumann-Haefelin D."/>
            <person name="Mueller-Lantzsch N."/>
        </authorList>
    </citation>
    <scope>CHARACTERIZATION</scope>
</reference>
<proteinExistence type="evidence at protein level"/>
<gene>
    <name type="primary">ERVK-24</name>
</gene>
<feature type="initiator methionine" description="Removed" evidence="2">
    <location>
        <position position="1"/>
    </location>
</feature>
<feature type="chain" id="PRO_0000186754" description="Endogenous retrovirus group K member 24 Gag polyprotein">
    <location>
        <begin position="2"/>
        <end position="666"/>
    </location>
</feature>
<feature type="zinc finger region" description="CCHC-type 1" evidence="3">
    <location>
        <begin position="544"/>
        <end position="561"/>
    </location>
</feature>
<feature type="zinc finger region" description="CCHC-type 2" evidence="3">
    <location>
        <begin position="580"/>
        <end position="597"/>
    </location>
</feature>
<feature type="region of interest" description="Disordered" evidence="4">
    <location>
        <begin position="165"/>
        <end position="264"/>
    </location>
</feature>
<feature type="region of interest" description="Disordered" evidence="4">
    <location>
        <begin position="598"/>
        <end position="641"/>
    </location>
</feature>
<feature type="compositionally biased region" description="Pro residues" evidence="4">
    <location>
        <begin position="232"/>
        <end position="247"/>
    </location>
</feature>
<feature type="compositionally biased region" description="Polar residues" evidence="4">
    <location>
        <begin position="604"/>
        <end position="622"/>
    </location>
</feature>
<feature type="compositionally biased region" description="Low complexity" evidence="4">
    <location>
        <begin position="624"/>
        <end position="640"/>
    </location>
</feature>
<feature type="lipid moiety-binding region" description="N-myristoyl glycine" evidence="2">
    <location>
        <position position="2"/>
    </location>
</feature>
<feature type="sequence conflict" description="In Ref. 1; AAD51791." evidence="5" ref="1">
    <original>L</original>
    <variation>I</variation>
    <location>
        <position position="112"/>
    </location>
</feature>
<feature type="strand" evidence="6">
    <location>
        <begin position="284"/>
        <end position="286"/>
    </location>
</feature>
<feature type="strand" evidence="6">
    <location>
        <begin position="305"/>
        <end position="307"/>
    </location>
</feature>
<feature type="helix" evidence="6">
    <location>
        <begin position="312"/>
        <end position="324"/>
    </location>
</feature>
<feature type="helix" evidence="6">
    <location>
        <begin position="330"/>
        <end position="341"/>
    </location>
</feature>
<feature type="helix" evidence="6">
    <location>
        <begin position="347"/>
        <end position="357"/>
    </location>
</feature>
<feature type="helix" evidence="6">
    <location>
        <begin position="360"/>
        <end position="382"/>
    </location>
</feature>
<feature type="strand" evidence="6">
    <location>
        <begin position="383"/>
        <end position="386"/>
    </location>
</feature>
<feature type="helix" evidence="6">
    <location>
        <begin position="392"/>
        <end position="396"/>
    </location>
</feature>
<feature type="turn" evidence="6">
    <location>
        <begin position="399"/>
        <end position="401"/>
    </location>
</feature>
<feature type="strand" evidence="6">
    <location>
        <begin position="402"/>
        <end position="404"/>
    </location>
</feature>
<feature type="helix" evidence="6">
    <location>
        <begin position="405"/>
        <end position="408"/>
    </location>
</feature>
<feature type="helix" evidence="6">
    <location>
        <begin position="413"/>
        <end position="426"/>
    </location>
</feature>
<feature type="helix" evidence="6">
    <location>
        <begin position="427"/>
        <end position="429"/>
    </location>
</feature>
<feature type="turn" evidence="6">
    <location>
        <begin position="440"/>
        <end position="442"/>
    </location>
</feature>
<feature type="helix" evidence="6">
    <location>
        <begin position="451"/>
        <end position="465"/>
    </location>
</feature>
<feature type="helix" evidence="6">
    <location>
        <begin position="469"/>
        <end position="482"/>
    </location>
</feature>
<feature type="helix" evidence="6">
    <location>
        <begin position="486"/>
        <end position="492"/>
    </location>
</feature>
<feature type="helix" evidence="6">
    <location>
        <begin position="493"/>
        <end position="495"/>
    </location>
</feature>
<feature type="helix" evidence="6">
    <location>
        <begin position="505"/>
        <end position="513"/>
    </location>
</feature>
<comment type="function">
    <text>The products of the Gag polyproteins of infectious retroviruses perform highly complex orchestrated tasks during the assembly, budding, maturation, and infection stages of the viral replication cycle. During viral assembly, the proteins form membrane associations and self-associations that ultimately result in budding of an immature virion from the infected cell. Gag precursors also function during viral assembly to selectively bind and package two plus strands of genomic RNA. Endogenous Gag proteins may have kept, lost or modified their original function during evolution.</text>
</comment>
<comment type="subcellular location">
    <subcellularLocation>
        <location>Cell membrane</location>
        <topology>Lipid-anchor</topology>
    </subcellularLocation>
    <text evidence="1">Cytoplasmic membrane (in a transfection system).</text>
</comment>
<comment type="alternative products">
    <event type="ribosomal frameshifting"/>
    <isoform>
        <id>P63145-1</id>
        <name>1</name>
        <sequence type="displayed"/>
    </isoform>
    <text>This protein is synthesized as a Gag polypeptide and as a Gag-Pro-Pol polyprotein. The later is the precursor of the Pro and Pol proteins. It is thought, by similarity with type-B retroviruses, to be generated by -1 frameshifts occurring at the Gag-Pro and Pro-Pol genes boundaries.</text>
</comment>
<comment type="domain">
    <text>HERV-K Gag polyprotein contains regions homologous to the matrix (MA), capsid (CA) and nucleocapsid (NC) proteins from infectious retroviruses. Evidence suggests that HERV-K(HML-2) Gag polyprotein can be cleaved into mature MA, CA and NC under certain circumstances. However, the exact boundaries as well as the size of processed Gag proteins have not been precisely determined yet.</text>
</comment>
<comment type="PTM">
    <text evidence="1">Myristoylation is essential for retroviral assembly. Alteration of the glycine residue leads to a block in the budding of particles and an accumulation of Gag inside the cell (By similarity).</text>
</comment>
<comment type="PTM">
    <text evidence="5">Specific enzymatic cleavages may yield mature proteins.</text>
</comment>
<comment type="miscellaneous">
    <text>This Gag protein is encoded by a human specific provirus.</text>
</comment>
<comment type="miscellaneous">
    <text>Intergenic, closest flanking gene being PRODH.</text>
</comment>
<comment type="similarity">
    <text evidence="5">Belongs to the beta type-B retroviral Gag protein family. HERV class-II K(HML-2) gag subfamily.</text>
</comment>
<comment type="sequence caution" evidence="5">
    <conflict type="frameshift">
        <sequence resource="EMBL-CDS" id="AAD51791"/>
    </conflict>
    <text>The frameshift occurs probably within the codons for the last amino acids in the Gag and Pro open reading frames.</text>
</comment>
<accession>P63145</accession>
<accession>Q9UKI1</accession>